<dbReference type="EC" id="6.1.1.-" evidence="1"/>
<dbReference type="EMBL" id="CP000378">
    <property type="protein sequence ID" value="ABF76607.1"/>
    <property type="molecule type" value="Genomic_DNA"/>
</dbReference>
<dbReference type="SMR" id="Q1BUU8"/>
<dbReference type="HOGENOM" id="CLU_015768_0_1_4"/>
<dbReference type="GO" id="GO:0005829">
    <property type="term" value="C:cytosol"/>
    <property type="evidence" value="ECO:0007669"/>
    <property type="project" value="TreeGrafter"/>
</dbReference>
<dbReference type="GO" id="GO:0005524">
    <property type="term" value="F:ATP binding"/>
    <property type="evidence" value="ECO:0007669"/>
    <property type="project" value="UniProtKB-KW"/>
</dbReference>
<dbReference type="GO" id="GO:0004818">
    <property type="term" value="F:glutamate-tRNA ligase activity"/>
    <property type="evidence" value="ECO:0007669"/>
    <property type="project" value="TreeGrafter"/>
</dbReference>
<dbReference type="GO" id="GO:0008270">
    <property type="term" value="F:zinc ion binding"/>
    <property type="evidence" value="ECO:0007669"/>
    <property type="project" value="UniProtKB-UniRule"/>
</dbReference>
<dbReference type="GO" id="GO:0006424">
    <property type="term" value="P:glutamyl-tRNA aminoacylation"/>
    <property type="evidence" value="ECO:0007669"/>
    <property type="project" value="InterPro"/>
</dbReference>
<dbReference type="GO" id="GO:0006400">
    <property type="term" value="P:tRNA modification"/>
    <property type="evidence" value="ECO:0007669"/>
    <property type="project" value="InterPro"/>
</dbReference>
<dbReference type="Gene3D" id="3.40.50.620">
    <property type="entry name" value="HUPs"/>
    <property type="match status" value="1"/>
</dbReference>
<dbReference type="HAMAP" id="MF_01428">
    <property type="entry name" value="Glu_Q_tRNA_synth"/>
    <property type="match status" value="1"/>
</dbReference>
<dbReference type="InterPro" id="IPR022380">
    <property type="entry name" value="Glu-Q_tRNA(Asp)_Synthase"/>
</dbReference>
<dbReference type="InterPro" id="IPR000924">
    <property type="entry name" value="Glu/Gln-tRNA-synth"/>
</dbReference>
<dbReference type="InterPro" id="IPR020058">
    <property type="entry name" value="Glu/Gln-tRNA-synth_Ib_cat-dom"/>
</dbReference>
<dbReference type="InterPro" id="IPR049940">
    <property type="entry name" value="GluQ/Sye"/>
</dbReference>
<dbReference type="InterPro" id="IPR014729">
    <property type="entry name" value="Rossmann-like_a/b/a_fold"/>
</dbReference>
<dbReference type="NCBIfam" id="NF004313">
    <property type="entry name" value="PRK05710.1-2"/>
    <property type="match status" value="1"/>
</dbReference>
<dbReference type="NCBIfam" id="NF004314">
    <property type="entry name" value="PRK05710.1-3"/>
    <property type="match status" value="1"/>
</dbReference>
<dbReference type="NCBIfam" id="NF004315">
    <property type="entry name" value="PRK05710.1-4"/>
    <property type="match status" value="1"/>
</dbReference>
<dbReference type="NCBIfam" id="TIGR03838">
    <property type="entry name" value="queuosine_YadB"/>
    <property type="match status" value="1"/>
</dbReference>
<dbReference type="PANTHER" id="PTHR43311">
    <property type="entry name" value="GLUTAMATE--TRNA LIGASE"/>
    <property type="match status" value="1"/>
</dbReference>
<dbReference type="PANTHER" id="PTHR43311:SF1">
    <property type="entry name" value="GLUTAMYL-Q TRNA(ASP) SYNTHETASE"/>
    <property type="match status" value="1"/>
</dbReference>
<dbReference type="Pfam" id="PF00749">
    <property type="entry name" value="tRNA-synt_1c"/>
    <property type="match status" value="1"/>
</dbReference>
<dbReference type="PRINTS" id="PR00987">
    <property type="entry name" value="TRNASYNTHGLU"/>
</dbReference>
<dbReference type="SUPFAM" id="SSF52374">
    <property type="entry name" value="Nucleotidylyl transferase"/>
    <property type="match status" value="1"/>
</dbReference>
<reference key="1">
    <citation type="submission" date="2006-05" db="EMBL/GenBank/DDBJ databases">
        <title>Complete sequence of chromosome 1 of Burkholderia cenocepacia AU 1054.</title>
        <authorList>
            <consortium name="US DOE Joint Genome Institute"/>
            <person name="Copeland A."/>
            <person name="Lucas S."/>
            <person name="Lapidus A."/>
            <person name="Barry K."/>
            <person name="Detter J.C."/>
            <person name="Glavina del Rio T."/>
            <person name="Hammon N."/>
            <person name="Israni S."/>
            <person name="Dalin E."/>
            <person name="Tice H."/>
            <person name="Pitluck S."/>
            <person name="Chain P."/>
            <person name="Malfatti S."/>
            <person name="Shin M."/>
            <person name="Vergez L."/>
            <person name="Schmutz J."/>
            <person name="Larimer F."/>
            <person name="Land M."/>
            <person name="Hauser L."/>
            <person name="Kyrpides N."/>
            <person name="Lykidis A."/>
            <person name="LiPuma J.J."/>
            <person name="Konstantinidis K."/>
            <person name="Tiedje J.M."/>
            <person name="Richardson P."/>
        </authorList>
    </citation>
    <scope>NUCLEOTIDE SEQUENCE [LARGE SCALE GENOMIC DNA]</scope>
    <source>
        <strain>AU 1054</strain>
    </source>
</reference>
<sequence>MNPGYRGRFAPSPTGPLHFGSLVGALASWLDARAHGGVWLVRIEDLDGPRTVPGAADDILATLAHFGMTPDEPPVWQSTRDAAYTAALERLVAAGLVYPCGCTRKEIADSLRAAHERHTTLAYPGTCRTGLHGKPARAWRLRVPDGCDAVITFDDRWQHTQSQNLATEVGDFVLKRADGQWAYQLAVVVDDADAGITHVVRGADLLDSTARQIYLQRCLGVPTPEYLHVPVVVDANGEKLSKQTGATALERNDPLPALQAAAAHLGLANDGDLPGGTLDAFYAAATDAWARRFGPRAG</sequence>
<name>GLUQ_BURO1</name>
<proteinExistence type="inferred from homology"/>
<organism>
    <name type="scientific">Burkholderia orbicola (strain AU 1054)</name>
    <dbReference type="NCBI Taxonomy" id="331271"/>
    <lineage>
        <taxon>Bacteria</taxon>
        <taxon>Pseudomonadati</taxon>
        <taxon>Pseudomonadota</taxon>
        <taxon>Betaproteobacteria</taxon>
        <taxon>Burkholderiales</taxon>
        <taxon>Burkholderiaceae</taxon>
        <taxon>Burkholderia</taxon>
        <taxon>Burkholderia cepacia complex</taxon>
        <taxon>Burkholderia orbicola</taxon>
    </lineage>
</organism>
<accession>Q1BUU8</accession>
<gene>
    <name evidence="1" type="primary">gluQ</name>
    <name type="ordered locus">Bcen_1703</name>
</gene>
<feature type="chain" id="PRO_1000024350" description="Glutamyl-Q tRNA(Asp) synthetase">
    <location>
        <begin position="1"/>
        <end position="298"/>
    </location>
</feature>
<feature type="short sequence motif" description="'HIGH' region">
    <location>
        <begin position="11"/>
        <end position="21"/>
    </location>
</feature>
<feature type="short sequence motif" description="'KMSKS' region">
    <location>
        <begin position="239"/>
        <end position="243"/>
    </location>
</feature>
<feature type="binding site" evidence="1">
    <location>
        <begin position="8"/>
        <end position="12"/>
    </location>
    <ligand>
        <name>L-glutamate</name>
        <dbReference type="ChEBI" id="CHEBI:29985"/>
    </ligand>
</feature>
<feature type="binding site" evidence="1">
    <location>
        <position position="44"/>
    </location>
    <ligand>
        <name>L-glutamate</name>
        <dbReference type="ChEBI" id="CHEBI:29985"/>
    </ligand>
</feature>
<feature type="binding site" evidence="1">
    <location>
        <position position="100"/>
    </location>
    <ligand>
        <name>Zn(2+)</name>
        <dbReference type="ChEBI" id="CHEBI:29105"/>
    </ligand>
</feature>
<feature type="binding site" evidence="1">
    <location>
        <position position="102"/>
    </location>
    <ligand>
        <name>Zn(2+)</name>
        <dbReference type="ChEBI" id="CHEBI:29105"/>
    </ligand>
</feature>
<feature type="binding site" evidence="1">
    <location>
        <position position="123"/>
    </location>
    <ligand>
        <name>Zn(2+)</name>
        <dbReference type="ChEBI" id="CHEBI:29105"/>
    </ligand>
</feature>
<feature type="binding site" evidence="1">
    <location>
        <position position="127"/>
    </location>
    <ligand>
        <name>Zn(2+)</name>
        <dbReference type="ChEBI" id="CHEBI:29105"/>
    </ligand>
</feature>
<feature type="binding site" evidence="1">
    <location>
        <position position="183"/>
    </location>
    <ligand>
        <name>L-glutamate</name>
        <dbReference type="ChEBI" id="CHEBI:29985"/>
    </ligand>
</feature>
<feature type="binding site" evidence="1">
    <location>
        <position position="201"/>
    </location>
    <ligand>
        <name>L-glutamate</name>
        <dbReference type="ChEBI" id="CHEBI:29985"/>
    </ligand>
</feature>
<feature type="binding site" evidence="1">
    <location>
        <position position="242"/>
    </location>
    <ligand>
        <name>ATP</name>
        <dbReference type="ChEBI" id="CHEBI:30616"/>
    </ligand>
</feature>
<protein>
    <recommendedName>
        <fullName evidence="1">Glutamyl-Q tRNA(Asp) synthetase</fullName>
        <shortName evidence="1">Glu-Q-RSs</shortName>
        <ecNumber evidence="1">6.1.1.-</ecNumber>
    </recommendedName>
</protein>
<evidence type="ECO:0000255" key="1">
    <source>
        <dbReference type="HAMAP-Rule" id="MF_01428"/>
    </source>
</evidence>
<comment type="function">
    <text evidence="1">Catalyzes the tRNA-independent activation of glutamate in presence of ATP and the subsequent transfer of glutamate onto a tRNA(Asp). Glutamate is transferred on the 2-amino-5-(4,5-dihydroxy-2-cyclopenten-1-yl) moiety of the queuosine in the wobble position of the QUC anticodon.</text>
</comment>
<comment type="cofactor">
    <cofactor evidence="1">
        <name>Zn(2+)</name>
        <dbReference type="ChEBI" id="CHEBI:29105"/>
    </cofactor>
    <text evidence="1">Binds 1 zinc ion per subunit.</text>
</comment>
<comment type="similarity">
    <text evidence="1">Belongs to the class-I aminoacyl-tRNA synthetase family. GluQ subfamily.</text>
</comment>
<keyword id="KW-0030">Aminoacyl-tRNA synthetase</keyword>
<keyword id="KW-0067">ATP-binding</keyword>
<keyword id="KW-0436">Ligase</keyword>
<keyword id="KW-0479">Metal-binding</keyword>
<keyword id="KW-0547">Nucleotide-binding</keyword>
<keyword id="KW-0862">Zinc</keyword>